<proteinExistence type="evidence at protein level"/>
<reference key="1">
    <citation type="journal article" date="1990" name="J. Biol. Chem.">
        <title>Primary structure of alanyl-tRNA synthetase and the regulation of its mRNA levels in Bombyx mori.</title>
        <authorList>
            <person name="Chang P.K."/>
            <person name="Dignam J.D."/>
        </authorList>
    </citation>
    <scope>NUCLEOTIDE SEQUENCE [MRNA]</scope>
    <scope>PROTEIN SEQUENCE OF 456-490</scope>
    <source>
        <tissue>Posterior silk gland</tissue>
    </source>
</reference>
<reference key="2">
    <citation type="journal article" date="1991" name="Eur. J. Biochem.">
        <title>Alanyl-tRNA synthetase from Escherichia coli, Bombyx mori and Ratus ratus. Existence of common structural features.</title>
        <authorList>
            <person name="Dignam J.D."/>
            <person name="Dignam S.S."/>
            <person name="Brumley L.L."/>
        </authorList>
    </citation>
    <scope>PROTEIN SEQUENCE OF 456-488</scope>
    <source>
        <tissue>Posterior silk gland</tissue>
    </source>
</reference>
<organism>
    <name type="scientific">Bombyx mori</name>
    <name type="common">Silk moth</name>
    <dbReference type="NCBI Taxonomy" id="7091"/>
    <lineage>
        <taxon>Eukaryota</taxon>
        <taxon>Metazoa</taxon>
        <taxon>Ecdysozoa</taxon>
        <taxon>Arthropoda</taxon>
        <taxon>Hexapoda</taxon>
        <taxon>Insecta</taxon>
        <taxon>Pterygota</taxon>
        <taxon>Neoptera</taxon>
        <taxon>Endopterygota</taxon>
        <taxon>Lepidoptera</taxon>
        <taxon>Glossata</taxon>
        <taxon>Ditrysia</taxon>
        <taxon>Bombycoidea</taxon>
        <taxon>Bombycidae</taxon>
        <taxon>Bombycinae</taxon>
        <taxon>Bombyx</taxon>
    </lineage>
</organism>
<protein>
    <recommendedName>
        <fullName evidence="1">Alanine--tRNA ligase, cytoplasmic</fullName>
        <ecNumber evidence="1">6.1.1.7</ecNumber>
    </recommendedName>
    <alternativeName>
        <fullName evidence="1">Alanyl-tRNA synthetase</fullName>
        <shortName evidence="1">AlaRS</shortName>
    </alternativeName>
</protein>
<accession>P21894</accession>
<comment type="function">
    <text evidence="1">Catalyzes the attachment of alanine to tRNA(Ala) in a two-step reaction: alanine is first activated by ATP to form Ala-AMP and then transferred to the acceptor end of tRNA(Ala). Also edits incorrectly charged tRNA(Ala) via its editing domain.</text>
</comment>
<comment type="catalytic activity">
    <reaction evidence="1">
        <text>tRNA(Ala) + L-alanine + ATP = L-alanyl-tRNA(Ala) + AMP + diphosphate</text>
        <dbReference type="Rhea" id="RHEA:12540"/>
        <dbReference type="Rhea" id="RHEA-COMP:9657"/>
        <dbReference type="Rhea" id="RHEA-COMP:9923"/>
        <dbReference type="ChEBI" id="CHEBI:30616"/>
        <dbReference type="ChEBI" id="CHEBI:33019"/>
        <dbReference type="ChEBI" id="CHEBI:57972"/>
        <dbReference type="ChEBI" id="CHEBI:78442"/>
        <dbReference type="ChEBI" id="CHEBI:78497"/>
        <dbReference type="ChEBI" id="CHEBI:456215"/>
        <dbReference type="EC" id="6.1.1.7"/>
    </reaction>
</comment>
<comment type="cofactor">
    <cofactor evidence="1">
        <name>Zn(2+)</name>
        <dbReference type="ChEBI" id="CHEBI:29105"/>
    </cofactor>
    <text evidence="1">Binds 1 zinc ion per subunit.</text>
</comment>
<comment type="subunit">
    <text>Monomer.</text>
</comment>
<comment type="subcellular location">
    <subcellularLocation>
        <location evidence="1">Cytoplasm</location>
    </subcellularLocation>
</comment>
<comment type="domain">
    <text evidence="1">Consists of three domains; the N-terminal catalytic domain, the editing domain and the C-terminal C-Ala domain. The editing domain removes incorrectly charged amino acids, while the C-Ala domain, along with tRNA(Ala), serves as a bridge to cooperatively bring together the editing and aminoacylation centers thus stimulating deacylation of misacylated tRNAs.</text>
</comment>
<comment type="PTM">
    <text>The N-terminus is blocked.</text>
</comment>
<comment type="similarity">
    <text evidence="1">Belongs to the class-II aminoacyl-tRNA synthetase family.</text>
</comment>
<dbReference type="EC" id="6.1.1.7" evidence="1"/>
<dbReference type="EMBL" id="M55993">
    <property type="protein sequence ID" value="AAA27821.1"/>
    <property type="molecule type" value="mRNA"/>
</dbReference>
<dbReference type="PIR" id="A38327">
    <property type="entry name" value="SYMTAT"/>
</dbReference>
<dbReference type="RefSeq" id="NP_001037452.1">
    <property type="nucleotide sequence ID" value="NM_001043987.1"/>
</dbReference>
<dbReference type="SMR" id="P21894"/>
<dbReference type="FunCoup" id="P21894">
    <property type="interactions" value="1676"/>
</dbReference>
<dbReference type="STRING" id="7091.P21894"/>
<dbReference type="PaxDb" id="7091-BGIBMGA006216-TA"/>
<dbReference type="EnsemblMetazoa" id="NM_001043987.1">
    <property type="protein sequence ID" value="NP_001037452.1"/>
    <property type="gene ID" value="LOC693023"/>
</dbReference>
<dbReference type="GeneID" id="693023"/>
<dbReference type="KEGG" id="bmor:693023"/>
<dbReference type="CTD" id="34156"/>
<dbReference type="eggNOG" id="KOG0188">
    <property type="taxonomic scope" value="Eukaryota"/>
</dbReference>
<dbReference type="HOGENOM" id="CLU_004485_2_0_1"/>
<dbReference type="InParanoid" id="P21894"/>
<dbReference type="OrthoDB" id="292870at7088"/>
<dbReference type="Proteomes" id="UP000005204">
    <property type="component" value="Unassembled WGS sequence"/>
</dbReference>
<dbReference type="GO" id="GO:0005739">
    <property type="term" value="C:mitochondrion"/>
    <property type="evidence" value="ECO:0007669"/>
    <property type="project" value="TreeGrafter"/>
</dbReference>
<dbReference type="GO" id="GO:0004813">
    <property type="term" value="F:alanine-tRNA ligase activity"/>
    <property type="evidence" value="ECO:0007669"/>
    <property type="project" value="UniProtKB-UniRule"/>
</dbReference>
<dbReference type="GO" id="GO:0002161">
    <property type="term" value="F:aminoacyl-tRNA deacylase activity"/>
    <property type="evidence" value="ECO:0007669"/>
    <property type="project" value="TreeGrafter"/>
</dbReference>
<dbReference type="GO" id="GO:0005524">
    <property type="term" value="F:ATP binding"/>
    <property type="evidence" value="ECO:0007669"/>
    <property type="project" value="UniProtKB-UniRule"/>
</dbReference>
<dbReference type="GO" id="GO:0000049">
    <property type="term" value="F:tRNA binding"/>
    <property type="evidence" value="ECO:0007669"/>
    <property type="project" value="UniProtKB-KW"/>
</dbReference>
<dbReference type="GO" id="GO:0008270">
    <property type="term" value="F:zinc ion binding"/>
    <property type="evidence" value="ECO:0007669"/>
    <property type="project" value="UniProtKB-UniRule"/>
</dbReference>
<dbReference type="GO" id="GO:0006419">
    <property type="term" value="P:alanyl-tRNA aminoacylation"/>
    <property type="evidence" value="ECO:0007669"/>
    <property type="project" value="InterPro"/>
</dbReference>
<dbReference type="CDD" id="cd00673">
    <property type="entry name" value="AlaRS_core"/>
    <property type="match status" value="1"/>
</dbReference>
<dbReference type="FunFam" id="3.30.930.10:FF:000011">
    <property type="entry name" value="Alanine--tRNA ligase, cytoplasmic"/>
    <property type="match status" value="1"/>
</dbReference>
<dbReference type="FunFam" id="3.30.980.10:FF:000004">
    <property type="entry name" value="Alanine--tRNA ligase, cytoplasmic"/>
    <property type="match status" value="1"/>
</dbReference>
<dbReference type="FunFam" id="2.40.30.130:FF:000002">
    <property type="entry name" value="alanine--tRNA ligase, cytoplasmic"/>
    <property type="match status" value="1"/>
</dbReference>
<dbReference type="FunFam" id="3.10.310.40:FF:000002">
    <property type="entry name" value="alanine--tRNA ligase, cytoplasmic"/>
    <property type="match status" value="1"/>
</dbReference>
<dbReference type="Gene3D" id="2.40.30.130">
    <property type="match status" value="1"/>
</dbReference>
<dbReference type="Gene3D" id="3.10.310.40">
    <property type="match status" value="1"/>
</dbReference>
<dbReference type="Gene3D" id="3.30.930.10">
    <property type="entry name" value="Bira Bifunctional Protein, Domain 2"/>
    <property type="match status" value="1"/>
</dbReference>
<dbReference type="Gene3D" id="3.30.980.10">
    <property type="entry name" value="Threonyl-trna Synthetase, Chain A, domain 2"/>
    <property type="match status" value="1"/>
</dbReference>
<dbReference type="HAMAP" id="MF_00036_B">
    <property type="entry name" value="Ala_tRNA_synth_B"/>
    <property type="match status" value="1"/>
</dbReference>
<dbReference type="InterPro" id="IPR045864">
    <property type="entry name" value="aa-tRNA-synth_II/BPL/LPL"/>
</dbReference>
<dbReference type="InterPro" id="IPR002318">
    <property type="entry name" value="Ala-tRNA-lgiase_IIc"/>
</dbReference>
<dbReference type="InterPro" id="IPR018162">
    <property type="entry name" value="Ala-tRNA-ligase_IIc_anticod-bd"/>
</dbReference>
<dbReference type="InterPro" id="IPR018165">
    <property type="entry name" value="Ala-tRNA-synth_IIc_core"/>
</dbReference>
<dbReference type="InterPro" id="IPR018164">
    <property type="entry name" value="Ala-tRNA-synth_IIc_N"/>
</dbReference>
<dbReference type="InterPro" id="IPR050058">
    <property type="entry name" value="Ala-tRNA_ligase"/>
</dbReference>
<dbReference type="InterPro" id="IPR023033">
    <property type="entry name" value="Ala_tRNA_ligase_euk/bac"/>
</dbReference>
<dbReference type="InterPro" id="IPR003156">
    <property type="entry name" value="DHHA1_dom"/>
</dbReference>
<dbReference type="InterPro" id="IPR018163">
    <property type="entry name" value="Thr/Ala-tRNA-synth_IIc_edit"/>
</dbReference>
<dbReference type="InterPro" id="IPR009000">
    <property type="entry name" value="Transl_B-barrel_sf"/>
</dbReference>
<dbReference type="InterPro" id="IPR012947">
    <property type="entry name" value="tRNA_SAD"/>
</dbReference>
<dbReference type="NCBIfam" id="TIGR00344">
    <property type="entry name" value="alaS"/>
    <property type="match status" value="1"/>
</dbReference>
<dbReference type="PANTHER" id="PTHR11777:SF9">
    <property type="entry name" value="ALANINE--TRNA LIGASE, CYTOPLASMIC"/>
    <property type="match status" value="1"/>
</dbReference>
<dbReference type="PANTHER" id="PTHR11777">
    <property type="entry name" value="ALANYL-TRNA SYNTHETASE"/>
    <property type="match status" value="1"/>
</dbReference>
<dbReference type="Pfam" id="PF02272">
    <property type="entry name" value="DHHA1"/>
    <property type="match status" value="1"/>
</dbReference>
<dbReference type="Pfam" id="PF01411">
    <property type="entry name" value="tRNA-synt_2c"/>
    <property type="match status" value="1"/>
</dbReference>
<dbReference type="Pfam" id="PF07973">
    <property type="entry name" value="tRNA_SAD"/>
    <property type="match status" value="1"/>
</dbReference>
<dbReference type="PRINTS" id="PR00980">
    <property type="entry name" value="TRNASYNTHALA"/>
</dbReference>
<dbReference type="SMART" id="SM00863">
    <property type="entry name" value="tRNA_SAD"/>
    <property type="match status" value="1"/>
</dbReference>
<dbReference type="SUPFAM" id="SSF55681">
    <property type="entry name" value="Class II aaRS and biotin synthetases"/>
    <property type="match status" value="1"/>
</dbReference>
<dbReference type="SUPFAM" id="SSF101353">
    <property type="entry name" value="Putative anticodon-binding domain of alanyl-tRNA synthetase (AlaRS)"/>
    <property type="match status" value="1"/>
</dbReference>
<dbReference type="SUPFAM" id="SSF55186">
    <property type="entry name" value="ThrRS/AlaRS common domain"/>
    <property type="match status" value="1"/>
</dbReference>
<dbReference type="SUPFAM" id="SSF50447">
    <property type="entry name" value="Translation proteins"/>
    <property type="match status" value="1"/>
</dbReference>
<dbReference type="PROSITE" id="PS50860">
    <property type="entry name" value="AA_TRNA_LIGASE_II_ALA"/>
    <property type="match status" value="1"/>
</dbReference>
<name>SYAC_BOMMO</name>
<sequence length="967" mass="108178">MDTSMTGNEIRKTFIDFFIKKGHKYVHSSSTIPLDDPTLLFANAGMNQFKPIFLGSVDPNSDMAQYIRVVNTQKCIRAGGKHNDLDDVGKDVYHHTFFEMMGNWSFGDYFKKEICAWAWELLTDVFKLSRERLYVTYFEGDPSSGLEPDLECRNIWLNLGVPEAHILPGSMKDNFWEMGETGPCGPCSELHYDRIGDREAAHLVNMDDPDVLEIWNLVFIQFNRETDGSLKLLPTKHIDCGLGLERLVSVIQNKRANYDTDFFMPIFKAIENATGVRPYSGKVGVDDVDGIDMAYRVLADHARTLTIALSDGGCPDNTGRGYVLRRILRRAVRYASEKLNAKPGFFGSLVYTVVELLGDVFPEIKKDPDSIVHVINEEEVQFLKTLLRGRNLLYRTIEKLNNSKTLPGDVAWRLYDTYGFPIDLTQLMCEEKGLNVDMEGYEKSRKESQLVSQGKAAGQEDLIALDVHAISHLQDTGIPATDDSPKYNYLPSSTDKDALYTFAPCTAKIVALRKNKEFVSEISSGQECGVILDRTSFYAEQGGQIFDEGYMVKIDDETVEFTVKNVQVKGGYVLHAGKVEGILKVGDTLSLHIDTERRRLVMNNHTGTHVLNNVLRKVLGNDSDQRGSLVMPDRLRFDFTNKGPMTIKQIKDTENEIKEIIAKNKTVYANYTSLSEAKKINGLRAMFDEHYPDPVRVVSVGVPVEDLIKNPDAPTGFETSVEFCGGSHLHRTSHIGEYVIVSEEGIAKGIRRIVAVTGPEAIKAINKLSVLENEVNNVANFIKEQNESISHKEVSKKIVDLTNEISQAQISYWKKDELRNMLKNLKKQLDDKERAEKAIIITQVTEKAKELCLERKESKYIVSELKAFGNTKALDGALKQVKQFCPNSAAMFFSVDKDADKIYCLAAVPKSDVEKGLLASEWVQSVVDIIGGKGGGKAESAQASGNNPNSLNEAIQIANEYAKSKLN</sequence>
<feature type="chain" id="PRO_0000075285" description="Alanine--tRNA ligase, cytoplasmic">
    <location>
        <begin position="1"/>
        <end position="967"/>
    </location>
</feature>
<feature type="binding site" evidence="1">
    <location>
        <position position="605"/>
    </location>
    <ligand>
        <name>Zn(2+)</name>
        <dbReference type="ChEBI" id="CHEBI:29105"/>
    </ligand>
</feature>
<feature type="binding site" evidence="1">
    <location>
        <position position="609"/>
    </location>
    <ligand>
        <name>Zn(2+)</name>
        <dbReference type="ChEBI" id="CHEBI:29105"/>
    </ligand>
</feature>
<feature type="binding site" evidence="1">
    <location>
        <position position="724"/>
    </location>
    <ligand>
        <name>Zn(2+)</name>
        <dbReference type="ChEBI" id="CHEBI:29105"/>
    </ligand>
</feature>
<feature type="binding site" evidence="1">
    <location>
        <position position="728"/>
    </location>
    <ligand>
        <name>Zn(2+)</name>
        <dbReference type="ChEBI" id="CHEBI:29105"/>
    </ligand>
</feature>
<keyword id="KW-0030">Aminoacyl-tRNA synthetase</keyword>
<keyword id="KW-0067">ATP-binding</keyword>
<keyword id="KW-0963">Cytoplasm</keyword>
<keyword id="KW-0903">Direct protein sequencing</keyword>
<keyword id="KW-0436">Ligase</keyword>
<keyword id="KW-0479">Metal-binding</keyword>
<keyword id="KW-0547">Nucleotide-binding</keyword>
<keyword id="KW-0648">Protein biosynthesis</keyword>
<keyword id="KW-1185">Reference proteome</keyword>
<keyword id="KW-0694">RNA-binding</keyword>
<keyword id="KW-0820">tRNA-binding</keyword>
<keyword id="KW-0862">Zinc</keyword>
<evidence type="ECO:0000255" key="1">
    <source>
        <dbReference type="HAMAP-Rule" id="MF_03133"/>
    </source>
</evidence>